<reference key="1">
    <citation type="journal article" date="1984" name="Nucleic Acids Res.">
        <title>The DNA sequence of the gene and genetic control sites for the excreted B. subtilis enzyme beta-glucanase.</title>
        <authorList>
            <person name="Murphy N."/>
            <person name="McConnell D.J."/>
            <person name="Cantwell B.A."/>
        </authorList>
    </citation>
    <scope>NUCLEOTIDE SEQUENCE [GENOMIC DNA]</scope>
    <source>
        <strain>C120</strain>
    </source>
</reference>
<reference key="2">
    <citation type="journal article" date="1989" name="Agric. Biol. Chem.">
        <title>Construction of a beta-glucanase hyperproducing Bacillus subtilis using the cloned beta-glucanase gene and a multi-copy plasmid.</title>
        <authorList>
            <person name="Tezuka H."/>
            <person name="Yuuki T."/>
            <person name="Yabuuchi S."/>
        </authorList>
    </citation>
    <scope>NUCLEOTIDE SEQUENCE [GENOMIC DNA]</scope>
    <source>
        <strain>HL-25</strain>
    </source>
</reference>
<reference key="3">
    <citation type="journal article" date="1996" name="Microbiology">
        <title>Sequencing of a 65 kb region of the Bacillus subtilis genome containing the lic and cel loci, and creation of a 177 kb contig covering the gnt-sacXY region.</title>
        <authorList>
            <person name="Yoshida K."/>
            <person name="Shindo K."/>
            <person name="Sano H."/>
            <person name="Seki S."/>
            <person name="Fujimura M."/>
            <person name="Yanai N."/>
            <person name="Miwa Y."/>
            <person name="Fujita Y."/>
        </authorList>
    </citation>
    <scope>NUCLEOTIDE SEQUENCE [GENOMIC DNA]</scope>
    <source>
        <strain>168 / BGSC1A1</strain>
    </source>
</reference>
<reference key="4">
    <citation type="journal article" date="1995" name="Microbiology">
        <title>Genes encoding xylan and beta-glucan hydrolysing enzymes in Bacillus subtilis: characterization, mapping and construction of strains deficient in lichenase, cellulase and xylanase.</title>
        <authorList>
            <person name="Wolf M."/>
            <person name="Geczi A."/>
            <person name="Simon O."/>
            <person name="Borriss R."/>
        </authorList>
    </citation>
    <scope>NUCLEOTIDE SEQUENCE [GENOMIC DNA]</scope>
    <source>
        <strain>168</strain>
    </source>
</reference>
<reference key="5">
    <citation type="journal article" date="1997" name="Nature">
        <title>The complete genome sequence of the Gram-positive bacterium Bacillus subtilis.</title>
        <authorList>
            <person name="Kunst F."/>
            <person name="Ogasawara N."/>
            <person name="Moszer I."/>
            <person name="Albertini A.M."/>
            <person name="Alloni G."/>
            <person name="Azevedo V."/>
            <person name="Bertero M.G."/>
            <person name="Bessieres P."/>
            <person name="Bolotin A."/>
            <person name="Borchert S."/>
            <person name="Borriss R."/>
            <person name="Boursier L."/>
            <person name="Brans A."/>
            <person name="Braun M."/>
            <person name="Brignell S.C."/>
            <person name="Bron S."/>
            <person name="Brouillet S."/>
            <person name="Bruschi C.V."/>
            <person name="Caldwell B."/>
            <person name="Capuano V."/>
            <person name="Carter N.M."/>
            <person name="Choi S.-K."/>
            <person name="Codani J.-J."/>
            <person name="Connerton I.F."/>
            <person name="Cummings N.J."/>
            <person name="Daniel R.A."/>
            <person name="Denizot F."/>
            <person name="Devine K.M."/>
            <person name="Duesterhoeft A."/>
            <person name="Ehrlich S.D."/>
            <person name="Emmerson P.T."/>
            <person name="Entian K.-D."/>
            <person name="Errington J."/>
            <person name="Fabret C."/>
            <person name="Ferrari E."/>
            <person name="Foulger D."/>
            <person name="Fritz C."/>
            <person name="Fujita M."/>
            <person name="Fujita Y."/>
            <person name="Fuma S."/>
            <person name="Galizzi A."/>
            <person name="Galleron N."/>
            <person name="Ghim S.-Y."/>
            <person name="Glaser P."/>
            <person name="Goffeau A."/>
            <person name="Golightly E.J."/>
            <person name="Grandi G."/>
            <person name="Guiseppi G."/>
            <person name="Guy B.J."/>
            <person name="Haga K."/>
            <person name="Haiech J."/>
            <person name="Harwood C.R."/>
            <person name="Henaut A."/>
            <person name="Hilbert H."/>
            <person name="Holsappel S."/>
            <person name="Hosono S."/>
            <person name="Hullo M.-F."/>
            <person name="Itaya M."/>
            <person name="Jones L.-M."/>
            <person name="Joris B."/>
            <person name="Karamata D."/>
            <person name="Kasahara Y."/>
            <person name="Klaerr-Blanchard M."/>
            <person name="Klein C."/>
            <person name="Kobayashi Y."/>
            <person name="Koetter P."/>
            <person name="Koningstein G."/>
            <person name="Krogh S."/>
            <person name="Kumano M."/>
            <person name="Kurita K."/>
            <person name="Lapidus A."/>
            <person name="Lardinois S."/>
            <person name="Lauber J."/>
            <person name="Lazarevic V."/>
            <person name="Lee S.-M."/>
            <person name="Levine A."/>
            <person name="Liu H."/>
            <person name="Masuda S."/>
            <person name="Mauel C."/>
            <person name="Medigue C."/>
            <person name="Medina N."/>
            <person name="Mellado R.P."/>
            <person name="Mizuno M."/>
            <person name="Moestl D."/>
            <person name="Nakai S."/>
            <person name="Noback M."/>
            <person name="Noone D."/>
            <person name="O'Reilly M."/>
            <person name="Ogawa K."/>
            <person name="Ogiwara A."/>
            <person name="Oudega B."/>
            <person name="Park S.-H."/>
            <person name="Parro V."/>
            <person name="Pohl T.M."/>
            <person name="Portetelle D."/>
            <person name="Porwollik S."/>
            <person name="Prescott A.M."/>
            <person name="Presecan E."/>
            <person name="Pujic P."/>
            <person name="Purnelle B."/>
            <person name="Rapoport G."/>
            <person name="Rey M."/>
            <person name="Reynolds S."/>
            <person name="Rieger M."/>
            <person name="Rivolta C."/>
            <person name="Rocha E."/>
            <person name="Roche B."/>
            <person name="Rose M."/>
            <person name="Sadaie Y."/>
            <person name="Sato T."/>
            <person name="Scanlan E."/>
            <person name="Schleich S."/>
            <person name="Schroeter R."/>
            <person name="Scoffone F."/>
            <person name="Sekiguchi J."/>
            <person name="Sekowska A."/>
            <person name="Seror S.J."/>
            <person name="Serror P."/>
            <person name="Shin B.-S."/>
            <person name="Soldo B."/>
            <person name="Sorokin A."/>
            <person name="Tacconi E."/>
            <person name="Takagi T."/>
            <person name="Takahashi H."/>
            <person name="Takemaru K."/>
            <person name="Takeuchi M."/>
            <person name="Tamakoshi A."/>
            <person name="Tanaka T."/>
            <person name="Terpstra P."/>
            <person name="Tognoni A."/>
            <person name="Tosato V."/>
            <person name="Uchiyama S."/>
            <person name="Vandenbol M."/>
            <person name="Vannier F."/>
            <person name="Vassarotti A."/>
            <person name="Viari A."/>
            <person name="Wambutt R."/>
            <person name="Wedler E."/>
            <person name="Wedler H."/>
            <person name="Weitzenegger T."/>
            <person name="Winters P."/>
            <person name="Wipat A."/>
            <person name="Yamamoto H."/>
            <person name="Yamane K."/>
            <person name="Yasumoto K."/>
            <person name="Yata K."/>
            <person name="Yoshida K."/>
            <person name="Yoshikawa H.-F."/>
            <person name="Zumstein E."/>
            <person name="Yoshikawa H."/>
            <person name="Danchin A."/>
        </authorList>
    </citation>
    <scope>NUCLEOTIDE SEQUENCE [LARGE SCALE GENOMIC DNA]</scope>
    <source>
        <strain>168</strain>
    </source>
</reference>
<reference key="6">
    <citation type="journal article" date="1996" name="J. Bacteriol.">
        <title>LicT, a Bacillus subtilis transcriptional antiterminator protein of the BglG family.</title>
        <authorList>
            <person name="Schnetz K."/>
            <person name="Stuelke J."/>
            <person name="Gertz S."/>
            <person name="Krueger S."/>
            <person name="Krieg M."/>
            <person name="Hecker M."/>
            <person name="Rak B."/>
        </authorList>
    </citation>
    <scope>NUCLEOTIDE SEQUENCE [GENOMIC DNA] OF 1-6</scope>
    <source>
        <strain>168 / BR151</strain>
    </source>
</reference>
<reference key="7">
    <citation type="journal article" date="1989" name="Agric. Biol. Chem.">
        <title>Purification and some properties of two enzymes from a beta-glucanase hyperproducing strain, Bacillus subtilis HL-25.</title>
        <authorList>
            <person name="Yuuki T."/>
            <person name="Tezuka H."/>
            <person name="Yabuuchi S."/>
        </authorList>
    </citation>
    <scope>PROTEIN SEQUENCE OF 29-63</scope>
    <scope>PYROGLUTAMATE FORMATION AT GLN-29</scope>
</reference>
<evidence type="ECO:0000250" key="1"/>
<evidence type="ECO:0000255" key="2">
    <source>
        <dbReference type="PROSITE-ProRule" id="PRU01098"/>
    </source>
</evidence>
<evidence type="ECO:0000255" key="3">
    <source>
        <dbReference type="PROSITE-ProRule" id="PRU10064"/>
    </source>
</evidence>
<evidence type="ECO:0000269" key="4">
    <source ref="7"/>
</evidence>
<evidence type="ECO:0000305" key="5"/>
<evidence type="ECO:0007829" key="6">
    <source>
        <dbReference type="PDB" id="3O5S"/>
    </source>
</evidence>
<dbReference type="EC" id="3.2.1.73"/>
<dbReference type="EMBL" id="X00754">
    <property type="protein sequence ID" value="CAA25328.1"/>
    <property type="molecule type" value="Genomic_DNA"/>
</dbReference>
<dbReference type="EMBL" id="D00518">
    <property type="protein sequence ID" value="BAA00405.1"/>
    <property type="molecule type" value="Genomic_DNA"/>
</dbReference>
<dbReference type="EMBL" id="D83026">
    <property type="protein sequence ID" value="BAA11697.1"/>
    <property type="molecule type" value="Genomic_DNA"/>
</dbReference>
<dbReference type="EMBL" id="Z46862">
    <property type="protein sequence ID" value="CAA86922.1"/>
    <property type="molecule type" value="Genomic_DNA"/>
</dbReference>
<dbReference type="EMBL" id="AL009126">
    <property type="protein sequence ID" value="CAB15943.1"/>
    <property type="molecule type" value="Genomic_DNA"/>
</dbReference>
<dbReference type="EMBL" id="Z28340">
    <property type="protein sequence ID" value="CAA82195.1"/>
    <property type="molecule type" value="Genomic_DNA"/>
</dbReference>
<dbReference type="PIR" id="I40370">
    <property type="entry name" value="LXBS"/>
</dbReference>
<dbReference type="RefSeq" id="NP_391786.1">
    <property type="nucleotide sequence ID" value="NC_000964.3"/>
</dbReference>
<dbReference type="RefSeq" id="WP_003244531.1">
    <property type="nucleotide sequence ID" value="NZ_OZ025638.1"/>
</dbReference>
<dbReference type="PDB" id="3O5S">
    <property type="method" value="X-ray"/>
    <property type="resolution" value="2.20 A"/>
    <property type="chains" value="A=29-242"/>
</dbReference>
<dbReference type="PDBsum" id="3O5S"/>
<dbReference type="SMR" id="P04957"/>
<dbReference type="FunCoup" id="P04957">
    <property type="interactions" value="54"/>
</dbReference>
<dbReference type="STRING" id="224308.BSU39070"/>
<dbReference type="CAZy" id="GH16">
    <property type="family name" value="Glycoside Hydrolase Family 16"/>
</dbReference>
<dbReference type="PaxDb" id="224308-BSU39070"/>
<dbReference type="EnsemblBacteria" id="CAB15943">
    <property type="protein sequence ID" value="CAB15943"/>
    <property type="gene ID" value="BSU_39070"/>
</dbReference>
<dbReference type="GeneID" id="937470"/>
<dbReference type="KEGG" id="bsu:BSU39070"/>
<dbReference type="PATRIC" id="fig|224308.179.peg.4230"/>
<dbReference type="eggNOG" id="COG2273">
    <property type="taxonomic scope" value="Bacteria"/>
</dbReference>
<dbReference type="InParanoid" id="P04957"/>
<dbReference type="OrthoDB" id="9809583at2"/>
<dbReference type="PhylomeDB" id="P04957"/>
<dbReference type="BioCyc" id="BSUB:BSU39070-MONOMER"/>
<dbReference type="BRENDA" id="3.2.1.73">
    <property type="organism ID" value="658"/>
</dbReference>
<dbReference type="SABIO-RK" id="P04957"/>
<dbReference type="EvolutionaryTrace" id="P04957"/>
<dbReference type="Proteomes" id="UP000001570">
    <property type="component" value="Chromosome"/>
</dbReference>
<dbReference type="GO" id="GO:0005576">
    <property type="term" value="C:extracellular region"/>
    <property type="evidence" value="ECO:0007669"/>
    <property type="project" value="UniProtKB-SubCell"/>
</dbReference>
<dbReference type="GO" id="GO:0042972">
    <property type="term" value="F:licheninase activity"/>
    <property type="evidence" value="ECO:0007669"/>
    <property type="project" value="UniProtKB-EC"/>
</dbReference>
<dbReference type="GO" id="GO:0005975">
    <property type="term" value="P:carbohydrate metabolic process"/>
    <property type="evidence" value="ECO:0007669"/>
    <property type="project" value="InterPro"/>
</dbReference>
<dbReference type="CDD" id="cd02175">
    <property type="entry name" value="GH16_lichenase"/>
    <property type="match status" value="1"/>
</dbReference>
<dbReference type="Gene3D" id="2.60.120.200">
    <property type="match status" value="1"/>
</dbReference>
<dbReference type="InterPro" id="IPR044791">
    <property type="entry name" value="Beta-glucanase/XTH"/>
</dbReference>
<dbReference type="InterPro" id="IPR008264">
    <property type="entry name" value="Beta_glucanase"/>
</dbReference>
<dbReference type="InterPro" id="IPR013320">
    <property type="entry name" value="ConA-like_dom_sf"/>
</dbReference>
<dbReference type="InterPro" id="IPR000757">
    <property type="entry name" value="GH16"/>
</dbReference>
<dbReference type="InterPro" id="IPR008263">
    <property type="entry name" value="GH16_AS"/>
</dbReference>
<dbReference type="NCBIfam" id="NF047856">
    <property type="entry name" value="BGlucanaseBglS"/>
    <property type="match status" value="1"/>
</dbReference>
<dbReference type="PANTHER" id="PTHR31062">
    <property type="entry name" value="XYLOGLUCAN ENDOTRANSGLUCOSYLASE/HYDROLASE PROTEIN 8-RELATED"/>
    <property type="match status" value="1"/>
</dbReference>
<dbReference type="Pfam" id="PF00722">
    <property type="entry name" value="Glyco_hydro_16"/>
    <property type="match status" value="1"/>
</dbReference>
<dbReference type="PRINTS" id="PR00737">
    <property type="entry name" value="GLHYDRLASE16"/>
</dbReference>
<dbReference type="SUPFAM" id="SSF49899">
    <property type="entry name" value="Concanavalin A-like lectins/glucanases"/>
    <property type="match status" value="1"/>
</dbReference>
<dbReference type="PROSITE" id="PS01034">
    <property type="entry name" value="GH16_1"/>
    <property type="match status" value="1"/>
</dbReference>
<dbReference type="PROSITE" id="PS51762">
    <property type="entry name" value="GH16_2"/>
    <property type="match status" value="1"/>
</dbReference>
<protein>
    <recommendedName>
        <fullName>Beta-glucanase</fullName>
        <ecNumber>3.2.1.73</ecNumber>
    </recommendedName>
    <alternativeName>
        <fullName>1,3-1,4-beta-D-glucan 4-glucanohydrolase</fullName>
    </alternativeName>
    <alternativeName>
        <fullName>Endo-beta-1,3-1,4 glucanase</fullName>
    </alternativeName>
    <alternativeName>
        <fullName>Lichenase</fullName>
    </alternativeName>
</protein>
<sequence length="242" mass="27269">MPYLKRVLLLLVTGLFMSLFAVTATASAQTGGSFFDPFNGYNSGFWQKADGYSNGNMFNCTWRANNVSMTSLGEMRLALTSPAYNKFDCGENRSVQTYGYGLYEVRMKPAKNTGIVSSFFTYTGPTDGTPWDEIDIEFLGKDTTKVQFNYYTNGAGNHEKIVDLGFDAANAYHTYAFDWQPNSIKWYVDGQLKHTATNQIPTTPGKIMMNLWNGTGVDEWLGSYNGVNPLYAHYDWVRYTKK</sequence>
<gene>
    <name type="primary">bglS</name>
    <name type="synonym">bgl</name>
    <name type="synonym">licS</name>
    <name type="ordered locus">BSU39070</name>
    <name type="ORF">N15B</name>
</gene>
<accession>P04957</accession>
<name>GUB_BACSU</name>
<organism>
    <name type="scientific">Bacillus subtilis (strain 168)</name>
    <dbReference type="NCBI Taxonomy" id="224308"/>
    <lineage>
        <taxon>Bacteria</taxon>
        <taxon>Bacillati</taxon>
        <taxon>Bacillota</taxon>
        <taxon>Bacilli</taxon>
        <taxon>Bacillales</taxon>
        <taxon>Bacillaceae</taxon>
        <taxon>Bacillus</taxon>
    </lineage>
</organism>
<proteinExistence type="evidence at protein level"/>
<keyword id="KW-0002">3D-structure</keyword>
<keyword id="KW-0903">Direct protein sequencing</keyword>
<keyword id="KW-1015">Disulfide bond</keyword>
<keyword id="KW-0326">Glycosidase</keyword>
<keyword id="KW-0378">Hydrolase</keyword>
<keyword id="KW-0873">Pyrrolidone carboxylic acid</keyword>
<keyword id="KW-1185">Reference proteome</keyword>
<keyword id="KW-0964">Secreted</keyword>
<keyword id="KW-0732">Signal</keyword>
<feature type="signal peptide" evidence="4">
    <location>
        <begin position="1"/>
        <end position="28"/>
    </location>
</feature>
<feature type="chain" id="PRO_0000011791" description="Beta-glucanase">
    <location>
        <begin position="29"/>
        <end position="242"/>
    </location>
</feature>
<feature type="domain" description="GH16" evidence="2">
    <location>
        <begin position="29"/>
        <end position="242"/>
    </location>
</feature>
<feature type="active site" description="Nucleophile" evidence="3">
    <location>
        <position position="133"/>
    </location>
</feature>
<feature type="active site" description="Proton donor" evidence="3">
    <location>
        <position position="137"/>
    </location>
</feature>
<feature type="modified residue" description="Pyrrolidone carboxylic acid" evidence="4">
    <location>
        <position position="29"/>
    </location>
</feature>
<feature type="disulfide bond" evidence="1">
    <location>
        <begin position="60"/>
        <end position="89"/>
    </location>
</feature>
<feature type="sequence variant" description="In strain: HL-25.">
    <original>A</original>
    <variation>S</variation>
    <location>
        <position position="24"/>
    </location>
</feature>
<feature type="sequence variant" description="In strain: HL-25.">
    <original>A</original>
    <variation>S</variation>
    <location>
        <position position="83"/>
    </location>
</feature>
<feature type="sequence variant" description="In strain: C120.">
    <original>P</original>
    <variation>L</variation>
    <location>
        <position position="204"/>
    </location>
</feature>
<feature type="strand" evidence="6">
    <location>
        <begin position="34"/>
        <end position="36"/>
    </location>
</feature>
<feature type="turn" evidence="6">
    <location>
        <begin position="43"/>
        <end position="45"/>
    </location>
</feature>
<feature type="strand" evidence="6">
    <location>
        <begin position="46"/>
        <end position="48"/>
    </location>
</feature>
<feature type="strand" evidence="6">
    <location>
        <begin position="60"/>
        <end position="62"/>
    </location>
</feature>
<feature type="helix" evidence="6">
    <location>
        <begin position="64"/>
        <end position="66"/>
    </location>
</feature>
<feature type="strand" evidence="6">
    <location>
        <begin position="67"/>
        <end position="69"/>
    </location>
</feature>
<feature type="strand" evidence="6">
    <location>
        <begin position="75"/>
        <end position="83"/>
    </location>
</feature>
<feature type="strand" evidence="6">
    <location>
        <begin position="86"/>
        <end position="96"/>
    </location>
</feature>
<feature type="strand" evidence="6">
    <location>
        <begin position="100"/>
        <end position="108"/>
    </location>
</feature>
<feature type="strand" evidence="6">
    <location>
        <begin position="115"/>
        <end position="123"/>
    </location>
</feature>
<feature type="helix" evidence="6">
    <location>
        <begin position="125"/>
        <end position="127"/>
    </location>
</feature>
<feature type="strand" evidence="6">
    <location>
        <begin position="132"/>
        <end position="139"/>
    </location>
</feature>
<feature type="strand" evidence="6">
    <location>
        <begin position="145"/>
        <end position="152"/>
    </location>
</feature>
<feature type="strand" evidence="6">
    <location>
        <begin position="160"/>
        <end position="163"/>
    </location>
</feature>
<feature type="helix" evidence="6">
    <location>
        <begin position="168"/>
        <end position="170"/>
    </location>
</feature>
<feature type="strand" evidence="6">
    <location>
        <begin position="173"/>
        <end position="179"/>
    </location>
</feature>
<feature type="strand" evidence="6">
    <location>
        <begin position="184"/>
        <end position="188"/>
    </location>
</feature>
<feature type="strand" evidence="6">
    <location>
        <begin position="191"/>
        <end position="196"/>
    </location>
</feature>
<feature type="strand" evidence="6">
    <location>
        <begin position="205"/>
        <end position="216"/>
    </location>
</feature>
<feature type="helix" evidence="6">
    <location>
        <begin position="218"/>
        <end position="221"/>
    </location>
</feature>
<feature type="strand" evidence="6">
    <location>
        <begin position="230"/>
        <end position="241"/>
    </location>
</feature>
<comment type="catalytic activity">
    <reaction>
        <text>Hydrolysis of (1-&gt;4)-beta-D-glucosidic linkages in beta-D-glucans containing (1-&gt;3)- and (1-&gt;4)-bonds.</text>
        <dbReference type="EC" id="3.2.1.73"/>
    </reaction>
</comment>
<comment type="subcellular location">
    <subcellularLocation>
        <location>Secreted</location>
    </subcellularLocation>
</comment>
<comment type="miscellaneous">
    <text>Beta-glucanases of Bacillus have a substrate range similar to lichenase of germinating barley.</text>
</comment>
<comment type="miscellaneous">
    <text>The sequence of strain 168 is shown.</text>
</comment>
<comment type="similarity">
    <text evidence="5">Belongs to the glycosyl hydrolase 16 family.</text>
</comment>